<accession>Q8UCS6</accession>
<dbReference type="EC" id="3.5.1.5" evidence="1"/>
<dbReference type="EMBL" id="AE007869">
    <property type="protein sequence ID" value="AAK88143.2"/>
    <property type="molecule type" value="Genomic_DNA"/>
</dbReference>
<dbReference type="PIR" id="AE2872">
    <property type="entry name" value="AE2872"/>
</dbReference>
<dbReference type="PIR" id="F97648">
    <property type="entry name" value="F97648"/>
</dbReference>
<dbReference type="RefSeq" id="NP_355358.2">
    <property type="nucleotide sequence ID" value="NC_003062.2"/>
</dbReference>
<dbReference type="RefSeq" id="WP_010972301.1">
    <property type="nucleotide sequence ID" value="NC_003062.2"/>
</dbReference>
<dbReference type="SMR" id="Q8UCS6"/>
<dbReference type="STRING" id="176299.Atu2407"/>
<dbReference type="EnsemblBacteria" id="AAK88143">
    <property type="protein sequence ID" value="AAK88143"/>
    <property type="gene ID" value="Atu2407"/>
</dbReference>
<dbReference type="GeneID" id="1134445"/>
<dbReference type="KEGG" id="atu:Atu2407"/>
<dbReference type="PATRIC" id="fig|176299.10.peg.2416"/>
<dbReference type="eggNOG" id="COG0831">
    <property type="taxonomic scope" value="Bacteria"/>
</dbReference>
<dbReference type="HOGENOM" id="CLU_145825_1_0_5"/>
<dbReference type="OrthoDB" id="9797217at2"/>
<dbReference type="PhylomeDB" id="Q8UCS6"/>
<dbReference type="BioCyc" id="AGRO:ATU2407-MONOMER"/>
<dbReference type="UniPathway" id="UPA00258">
    <property type="reaction ID" value="UER00370"/>
</dbReference>
<dbReference type="Proteomes" id="UP000000813">
    <property type="component" value="Chromosome circular"/>
</dbReference>
<dbReference type="GO" id="GO:0005737">
    <property type="term" value="C:cytoplasm"/>
    <property type="evidence" value="ECO:0007669"/>
    <property type="project" value="UniProtKB-SubCell"/>
</dbReference>
<dbReference type="GO" id="GO:0016151">
    <property type="term" value="F:nickel cation binding"/>
    <property type="evidence" value="ECO:0007669"/>
    <property type="project" value="InterPro"/>
</dbReference>
<dbReference type="GO" id="GO:0009039">
    <property type="term" value="F:urease activity"/>
    <property type="evidence" value="ECO:0007669"/>
    <property type="project" value="UniProtKB-UniRule"/>
</dbReference>
<dbReference type="GO" id="GO:0043419">
    <property type="term" value="P:urea catabolic process"/>
    <property type="evidence" value="ECO:0007669"/>
    <property type="project" value="UniProtKB-UniRule"/>
</dbReference>
<dbReference type="CDD" id="cd00390">
    <property type="entry name" value="Urease_gamma"/>
    <property type="match status" value="1"/>
</dbReference>
<dbReference type="Gene3D" id="3.30.280.10">
    <property type="entry name" value="Urease, gamma-like subunit"/>
    <property type="match status" value="1"/>
</dbReference>
<dbReference type="HAMAP" id="MF_00739">
    <property type="entry name" value="Urease_gamma"/>
    <property type="match status" value="1"/>
</dbReference>
<dbReference type="InterPro" id="IPR012010">
    <property type="entry name" value="Urease_gamma"/>
</dbReference>
<dbReference type="InterPro" id="IPR002026">
    <property type="entry name" value="Urease_gamma/gamma-beta_su"/>
</dbReference>
<dbReference type="InterPro" id="IPR036463">
    <property type="entry name" value="Urease_gamma_sf"/>
</dbReference>
<dbReference type="InterPro" id="IPR050069">
    <property type="entry name" value="Urease_subunit"/>
</dbReference>
<dbReference type="NCBIfam" id="NF009712">
    <property type="entry name" value="PRK13241.1"/>
    <property type="match status" value="1"/>
</dbReference>
<dbReference type="NCBIfam" id="TIGR00193">
    <property type="entry name" value="urease_gam"/>
    <property type="match status" value="1"/>
</dbReference>
<dbReference type="PANTHER" id="PTHR33569">
    <property type="entry name" value="UREASE"/>
    <property type="match status" value="1"/>
</dbReference>
<dbReference type="PANTHER" id="PTHR33569:SF1">
    <property type="entry name" value="UREASE"/>
    <property type="match status" value="1"/>
</dbReference>
<dbReference type="Pfam" id="PF00547">
    <property type="entry name" value="Urease_gamma"/>
    <property type="match status" value="1"/>
</dbReference>
<dbReference type="PIRSF" id="PIRSF001223">
    <property type="entry name" value="Urease_gamma"/>
    <property type="match status" value="1"/>
</dbReference>
<dbReference type="SUPFAM" id="SSF54111">
    <property type="entry name" value="Urease, gamma-subunit"/>
    <property type="match status" value="1"/>
</dbReference>
<gene>
    <name evidence="1" type="primary">ureA</name>
    <name type="ordered locus">Atu2407</name>
    <name type="ORF">AGR_C_4368</name>
</gene>
<sequence>MNLSPREKDKLLISMAAMVARRRLERGVKLNYPEAIALISDFVVEGARDGRAVADLMEAGAHVISRDQVMDGIADMIHDVQVEATFPDGTKLVTVHEPIR</sequence>
<evidence type="ECO:0000255" key="1">
    <source>
        <dbReference type="HAMAP-Rule" id="MF_00739"/>
    </source>
</evidence>
<organism>
    <name type="scientific">Agrobacterium fabrum (strain C58 / ATCC 33970)</name>
    <name type="common">Agrobacterium tumefaciens (strain C58)</name>
    <dbReference type="NCBI Taxonomy" id="176299"/>
    <lineage>
        <taxon>Bacteria</taxon>
        <taxon>Pseudomonadati</taxon>
        <taxon>Pseudomonadota</taxon>
        <taxon>Alphaproteobacteria</taxon>
        <taxon>Hyphomicrobiales</taxon>
        <taxon>Rhizobiaceae</taxon>
        <taxon>Rhizobium/Agrobacterium group</taxon>
        <taxon>Agrobacterium</taxon>
        <taxon>Agrobacterium tumefaciens complex</taxon>
    </lineage>
</organism>
<reference key="1">
    <citation type="journal article" date="2001" name="Science">
        <title>The genome of the natural genetic engineer Agrobacterium tumefaciens C58.</title>
        <authorList>
            <person name="Wood D.W."/>
            <person name="Setubal J.C."/>
            <person name="Kaul R."/>
            <person name="Monks D.E."/>
            <person name="Kitajima J.P."/>
            <person name="Okura V.K."/>
            <person name="Zhou Y."/>
            <person name="Chen L."/>
            <person name="Wood G.E."/>
            <person name="Almeida N.F. Jr."/>
            <person name="Woo L."/>
            <person name="Chen Y."/>
            <person name="Paulsen I.T."/>
            <person name="Eisen J.A."/>
            <person name="Karp P.D."/>
            <person name="Bovee D. Sr."/>
            <person name="Chapman P."/>
            <person name="Clendenning J."/>
            <person name="Deatherage G."/>
            <person name="Gillet W."/>
            <person name="Grant C."/>
            <person name="Kutyavin T."/>
            <person name="Levy R."/>
            <person name="Li M.-J."/>
            <person name="McClelland E."/>
            <person name="Palmieri A."/>
            <person name="Raymond C."/>
            <person name="Rouse G."/>
            <person name="Saenphimmachak C."/>
            <person name="Wu Z."/>
            <person name="Romero P."/>
            <person name="Gordon D."/>
            <person name="Zhang S."/>
            <person name="Yoo H."/>
            <person name="Tao Y."/>
            <person name="Biddle P."/>
            <person name="Jung M."/>
            <person name="Krespan W."/>
            <person name="Perry M."/>
            <person name="Gordon-Kamm B."/>
            <person name="Liao L."/>
            <person name="Kim S."/>
            <person name="Hendrick C."/>
            <person name="Zhao Z.-Y."/>
            <person name="Dolan M."/>
            <person name="Chumley F."/>
            <person name="Tingey S.V."/>
            <person name="Tomb J.-F."/>
            <person name="Gordon M.P."/>
            <person name="Olson M.V."/>
            <person name="Nester E.W."/>
        </authorList>
    </citation>
    <scope>NUCLEOTIDE SEQUENCE [LARGE SCALE GENOMIC DNA]</scope>
    <source>
        <strain>C58 / ATCC 33970</strain>
    </source>
</reference>
<reference key="2">
    <citation type="journal article" date="2001" name="Science">
        <title>Genome sequence of the plant pathogen and biotechnology agent Agrobacterium tumefaciens C58.</title>
        <authorList>
            <person name="Goodner B."/>
            <person name="Hinkle G."/>
            <person name="Gattung S."/>
            <person name="Miller N."/>
            <person name="Blanchard M."/>
            <person name="Qurollo B."/>
            <person name="Goldman B.S."/>
            <person name="Cao Y."/>
            <person name="Askenazi M."/>
            <person name="Halling C."/>
            <person name="Mullin L."/>
            <person name="Houmiel K."/>
            <person name="Gordon J."/>
            <person name="Vaudin M."/>
            <person name="Iartchouk O."/>
            <person name="Epp A."/>
            <person name="Liu F."/>
            <person name="Wollam C."/>
            <person name="Allinger M."/>
            <person name="Doughty D."/>
            <person name="Scott C."/>
            <person name="Lappas C."/>
            <person name="Markelz B."/>
            <person name="Flanagan C."/>
            <person name="Crowell C."/>
            <person name="Gurson J."/>
            <person name="Lomo C."/>
            <person name="Sear C."/>
            <person name="Strub G."/>
            <person name="Cielo C."/>
            <person name="Slater S."/>
        </authorList>
    </citation>
    <scope>NUCLEOTIDE SEQUENCE [LARGE SCALE GENOMIC DNA]</scope>
    <source>
        <strain>C58 / ATCC 33970</strain>
    </source>
</reference>
<name>URE3_AGRFC</name>
<feature type="chain" id="PRO_0000097986" description="Urease subunit gamma">
    <location>
        <begin position="1"/>
        <end position="100"/>
    </location>
</feature>
<comment type="catalytic activity">
    <reaction evidence="1">
        <text>urea + 2 H2O + H(+) = hydrogencarbonate + 2 NH4(+)</text>
        <dbReference type="Rhea" id="RHEA:20557"/>
        <dbReference type="ChEBI" id="CHEBI:15377"/>
        <dbReference type="ChEBI" id="CHEBI:15378"/>
        <dbReference type="ChEBI" id="CHEBI:16199"/>
        <dbReference type="ChEBI" id="CHEBI:17544"/>
        <dbReference type="ChEBI" id="CHEBI:28938"/>
        <dbReference type="EC" id="3.5.1.5"/>
    </reaction>
</comment>
<comment type="pathway">
    <text evidence="1">Nitrogen metabolism; urea degradation; CO(2) and NH(3) from urea (urease route): step 1/1.</text>
</comment>
<comment type="subunit">
    <text evidence="1">Heterotrimer of UreA (gamma), UreB (beta) and UreC (alpha) subunits. Three heterotrimers associate to form the active enzyme.</text>
</comment>
<comment type="subcellular location">
    <subcellularLocation>
        <location evidence="1">Cytoplasm</location>
    </subcellularLocation>
</comment>
<comment type="similarity">
    <text evidence="1">Belongs to the urease gamma subunit family.</text>
</comment>
<proteinExistence type="inferred from homology"/>
<protein>
    <recommendedName>
        <fullName evidence="1">Urease subunit gamma</fullName>
        <ecNumber evidence="1">3.5.1.5</ecNumber>
    </recommendedName>
    <alternativeName>
        <fullName evidence="1">Urea amidohydrolase subunit gamma</fullName>
    </alternativeName>
</protein>
<keyword id="KW-0963">Cytoplasm</keyword>
<keyword id="KW-0378">Hydrolase</keyword>
<keyword id="KW-1185">Reference proteome</keyword>